<protein>
    <recommendedName>
        <fullName evidence="1">Anti-sigma F factor</fullName>
        <ecNumber evidence="1">2.7.11.1</ecNumber>
    </recommendedName>
    <alternativeName>
        <fullName evidence="1">Stage II sporulation protein AB</fullName>
    </alternativeName>
</protein>
<organism>
    <name type="scientific">Clostridium kluyveri (strain NBRC 12016)</name>
    <dbReference type="NCBI Taxonomy" id="583346"/>
    <lineage>
        <taxon>Bacteria</taxon>
        <taxon>Bacillati</taxon>
        <taxon>Bacillota</taxon>
        <taxon>Clostridia</taxon>
        <taxon>Eubacteriales</taxon>
        <taxon>Clostridiaceae</taxon>
        <taxon>Clostridium</taxon>
    </lineage>
</organism>
<dbReference type="EC" id="2.7.11.1" evidence="1"/>
<dbReference type="EMBL" id="AP009049">
    <property type="protein sequence ID" value="BAH07844.1"/>
    <property type="molecule type" value="Genomic_DNA"/>
</dbReference>
<dbReference type="RefSeq" id="WP_012103498.1">
    <property type="nucleotide sequence ID" value="NC_011837.1"/>
</dbReference>
<dbReference type="SMR" id="B9E5R9"/>
<dbReference type="KEGG" id="ckr:CKR_2793"/>
<dbReference type="HOGENOM" id="CLU_090336_11_0_9"/>
<dbReference type="Proteomes" id="UP000007969">
    <property type="component" value="Chromosome"/>
</dbReference>
<dbReference type="GO" id="GO:0005524">
    <property type="term" value="F:ATP binding"/>
    <property type="evidence" value="ECO:0007669"/>
    <property type="project" value="UniProtKB-KW"/>
</dbReference>
<dbReference type="GO" id="GO:0106310">
    <property type="term" value="F:protein serine kinase activity"/>
    <property type="evidence" value="ECO:0007669"/>
    <property type="project" value="RHEA"/>
</dbReference>
<dbReference type="GO" id="GO:0004674">
    <property type="term" value="F:protein serine/threonine kinase activity"/>
    <property type="evidence" value="ECO:0007669"/>
    <property type="project" value="UniProtKB-KW"/>
</dbReference>
<dbReference type="GO" id="GO:0016989">
    <property type="term" value="F:sigma factor antagonist activity"/>
    <property type="evidence" value="ECO:0007669"/>
    <property type="project" value="InterPro"/>
</dbReference>
<dbReference type="GO" id="GO:0030436">
    <property type="term" value="P:asexual sporulation"/>
    <property type="evidence" value="ECO:0007669"/>
    <property type="project" value="UniProtKB-UniRule"/>
</dbReference>
<dbReference type="GO" id="GO:0042174">
    <property type="term" value="P:negative regulation of sporulation resulting in formation of a cellular spore"/>
    <property type="evidence" value="ECO:0007669"/>
    <property type="project" value="InterPro"/>
</dbReference>
<dbReference type="GO" id="GO:0030435">
    <property type="term" value="P:sporulation resulting in formation of a cellular spore"/>
    <property type="evidence" value="ECO:0007669"/>
    <property type="project" value="UniProtKB-KW"/>
</dbReference>
<dbReference type="Gene3D" id="3.30.565.10">
    <property type="entry name" value="Histidine kinase-like ATPase, C-terminal domain"/>
    <property type="match status" value="1"/>
</dbReference>
<dbReference type="HAMAP" id="MF_00637">
    <property type="entry name" value="Anti_sigma_F"/>
    <property type="match status" value="1"/>
</dbReference>
<dbReference type="InterPro" id="IPR050267">
    <property type="entry name" value="Anti-sigma-factor_SerPK"/>
</dbReference>
<dbReference type="InterPro" id="IPR010194">
    <property type="entry name" value="Anti-sigma_F"/>
</dbReference>
<dbReference type="InterPro" id="IPR036890">
    <property type="entry name" value="HATPase_C_sf"/>
</dbReference>
<dbReference type="NCBIfam" id="TIGR01925">
    <property type="entry name" value="spIIAB"/>
    <property type="match status" value="1"/>
</dbReference>
<dbReference type="PANTHER" id="PTHR35526:SF3">
    <property type="entry name" value="ANTI-SIGMA-F FACTOR RSBW"/>
    <property type="match status" value="1"/>
</dbReference>
<dbReference type="PANTHER" id="PTHR35526">
    <property type="entry name" value="ANTI-SIGMA-F FACTOR RSBW-RELATED"/>
    <property type="match status" value="1"/>
</dbReference>
<dbReference type="Pfam" id="PF13581">
    <property type="entry name" value="HATPase_c_2"/>
    <property type="match status" value="1"/>
</dbReference>
<dbReference type="SMART" id="SM00387">
    <property type="entry name" value="HATPase_c"/>
    <property type="match status" value="1"/>
</dbReference>
<dbReference type="SUPFAM" id="SSF55874">
    <property type="entry name" value="ATPase domain of HSP90 chaperone/DNA topoisomerase II/histidine kinase"/>
    <property type="match status" value="1"/>
</dbReference>
<reference key="1">
    <citation type="submission" date="2005-09" db="EMBL/GenBank/DDBJ databases">
        <title>Complete genome sequence of Clostridium kluyveri and comparative genomics of Clostridia species.</title>
        <authorList>
            <person name="Inui M."/>
            <person name="Nonaka H."/>
            <person name="Shinoda Y."/>
            <person name="Ikenaga Y."/>
            <person name="Abe M."/>
            <person name="Naito K."/>
            <person name="Vertes A.A."/>
            <person name="Yukawa H."/>
        </authorList>
    </citation>
    <scope>NUCLEOTIDE SEQUENCE [LARGE SCALE GENOMIC DNA]</scope>
    <source>
        <strain>NBRC 12016</strain>
    </source>
</reference>
<feature type="chain" id="PRO_1000147383" description="Anti-sigma F factor">
    <location>
        <begin position="1"/>
        <end position="142"/>
    </location>
</feature>
<proteinExistence type="inferred from homology"/>
<accession>B9E5R9</accession>
<evidence type="ECO:0000255" key="1">
    <source>
        <dbReference type="HAMAP-Rule" id="MF_00637"/>
    </source>
</evidence>
<sequence length="142" mass="15833">MYDNSMKIEFISKSQNESFARVSVAAFVSQLDPTLDELTDVKTAVSEAVTNSIIHGYENKEGIVKIEASIKGRELILIVEDNGIGIENIDMAMQPLYTSKPELERSGMGFTVMETFMDSLQVESEKNKGTRLIMKKVFNSLS</sequence>
<keyword id="KW-0067">ATP-binding</keyword>
<keyword id="KW-0418">Kinase</keyword>
<keyword id="KW-0547">Nucleotide-binding</keyword>
<keyword id="KW-0723">Serine/threonine-protein kinase</keyword>
<keyword id="KW-0749">Sporulation</keyword>
<keyword id="KW-0808">Transferase</keyword>
<gene>
    <name evidence="1" type="primary">spoIIAB</name>
    <name type="ordered locus">CKR_2793</name>
</gene>
<name>SP2AB_CLOK1</name>
<comment type="function">
    <text evidence="1">Binds to sigma F and blocks its ability to form an RNA polymerase holoenzyme (E-sigma F). Phosphorylates SpoIIAA on a serine residue. This phosphorylation may enable SpoIIAA to act as an anti-anti-sigma factor that counteracts SpoIIAB and thus releases sigma F from inhibition.</text>
</comment>
<comment type="catalytic activity">
    <reaction evidence="1">
        <text>L-seryl-[protein] + ATP = O-phospho-L-seryl-[protein] + ADP + H(+)</text>
        <dbReference type="Rhea" id="RHEA:17989"/>
        <dbReference type="Rhea" id="RHEA-COMP:9863"/>
        <dbReference type="Rhea" id="RHEA-COMP:11604"/>
        <dbReference type="ChEBI" id="CHEBI:15378"/>
        <dbReference type="ChEBI" id="CHEBI:29999"/>
        <dbReference type="ChEBI" id="CHEBI:30616"/>
        <dbReference type="ChEBI" id="CHEBI:83421"/>
        <dbReference type="ChEBI" id="CHEBI:456216"/>
        <dbReference type="EC" id="2.7.11.1"/>
    </reaction>
</comment>
<comment type="catalytic activity">
    <reaction evidence="1">
        <text>L-threonyl-[protein] + ATP = O-phospho-L-threonyl-[protein] + ADP + H(+)</text>
        <dbReference type="Rhea" id="RHEA:46608"/>
        <dbReference type="Rhea" id="RHEA-COMP:11060"/>
        <dbReference type="Rhea" id="RHEA-COMP:11605"/>
        <dbReference type="ChEBI" id="CHEBI:15378"/>
        <dbReference type="ChEBI" id="CHEBI:30013"/>
        <dbReference type="ChEBI" id="CHEBI:30616"/>
        <dbReference type="ChEBI" id="CHEBI:61977"/>
        <dbReference type="ChEBI" id="CHEBI:456216"/>
        <dbReference type="EC" id="2.7.11.1"/>
    </reaction>
</comment>
<comment type="similarity">
    <text evidence="1">Belongs to the anti-sigma-factor family.</text>
</comment>